<proteinExistence type="inferred from homology"/>
<comment type="function">
    <text evidence="1">ATP-dependent specificity component of the Clp protease. It directs the protease to specific substrates. Can perform chaperone functions in the absence of ClpP.</text>
</comment>
<comment type="subunit">
    <text evidence="1">Component of the ClpX-ClpP complex. Forms a hexameric ring that, in the presence of ATP, binds to fourteen ClpP subunits assembled into a disk-like structure with a central cavity, resembling the structure of eukaryotic proteasomes.</text>
</comment>
<comment type="similarity">
    <text evidence="1">Belongs to the ClpX chaperone family.</text>
</comment>
<keyword id="KW-0067">ATP-binding</keyword>
<keyword id="KW-0143">Chaperone</keyword>
<keyword id="KW-0479">Metal-binding</keyword>
<keyword id="KW-0547">Nucleotide-binding</keyword>
<keyword id="KW-0862">Zinc</keyword>
<reference key="1">
    <citation type="journal article" date="2006" name="Proc. Natl. Acad. Sci. U.S.A.">
        <title>Molecular genetic anatomy of inter- and intraserotype variation in the human bacterial pathogen group A Streptococcus.</title>
        <authorList>
            <person name="Beres S.B."/>
            <person name="Richter E.W."/>
            <person name="Nagiec M.J."/>
            <person name="Sumby P."/>
            <person name="Porcella S.F."/>
            <person name="DeLeo F.R."/>
            <person name="Musser J.M."/>
        </authorList>
    </citation>
    <scope>NUCLEOTIDE SEQUENCE [LARGE SCALE GENOMIC DNA]</scope>
    <source>
        <strain>MGAS9429</strain>
    </source>
</reference>
<feature type="chain" id="PRO_1000024679" description="ATP-dependent Clp protease ATP-binding subunit ClpX">
    <location>
        <begin position="1"/>
        <end position="409"/>
    </location>
</feature>
<feature type="domain" description="ClpX-type ZB" evidence="2">
    <location>
        <begin position="1"/>
        <end position="54"/>
    </location>
</feature>
<feature type="binding site" evidence="2">
    <location>
        <position position="13"/>
    </location>
    <ligand>
        <name>Zn(2+)</name>
        <dbReference type="ChEBI" id="CHEBI:29105"/>
    </ligand>
</feature>
<feature type="binding site" evidence="2">
    <location>
        <position position="16"/>
    </location>
    <ligand>
        <name>Zn(2+)</name>
        <dbReference type="ChEBI" id="CHEBI:29105"/>
    </ligand>
</feature>
<feature type="binding site" evidence="2">
    <location>
        <position position="35"/>
    </location>
    <ligand>
        <name>Zn(2+)</name>
        <dbReference type="ChEBI" id="CHEBI:29105"/>
    </ligand>
</feature>
<feature type="binding site" evidence="2">
    <location>
        <position position="38"/>
    </location>
    <ligand>
        <name>Zn(2+)</name>
        <dbReference type="ChEBI" id="CHEBI:29105"/>
    </ligand>
</feature>
<feature type="binding site" evidence="1">
    <location>
        <begin position="119"/>
        <end position="126"/>
    </location>
    <ligand>
        <name>ATP</name>
        <dbReference type="ChEBI" id="CHEBI:30616"/>
    </ligand>
</feature>
<name>CLPX_STRPC</name>
<organism>
    <name type="scientific">Streptococcus pyogenes serotype M12 (strain MGAS9429)</name>
    <dbReference type="NCBI Taxonomy" id="370551"/>
    <lineage>
        <taxon>Bacteria</taxon>
        <taxon>Bacillati</taxon>
        <taxon>Bacillota</taxon>
        <taxon>Bacilli</taxon>
        <taxon>Lactobacillales</taxon>
        <taxon>Streptococcaceae</taxon>
        <taxon>Streptococcus</taxon>
    </lineage>
</organism>
<evidence type="ECO:0000255" key="1">
    <source>
        <dbReference type="HAMAP-Rule" id="MF_00175"/>
    </source>
</evidence>
<evidence type="ECO:0000255" key="2">
    <source>
        <dbReference type="PROSITE-ProRule" id="PRU01250"/>
    </source>
</evidence>
<protein>
    <recommendedName>
        <fullName evidence="1">ATP-dependent Clp protease ATP-binding subunit ClpX</fullName>
    </recommendedName>
</protein>
<gene>
    <name evidence="1" type="primary">clpX</name>
    <name type="ordered locus">MGAS9429_Spy0747</name>
</gene>
<dbReference type="EMBL" id="CP000259">
    <property type="protein sequence ID" value="ABF31935.1"/>
    <property type="molecule type" value="Genomic_DNA"/>
</dbReference>
<dbReference type="RefSeq" id="WP_002990162.1">
    <property type="nucleotide sequence ID" value="NC_008021.1"/>
</dbReference>
<dbReference type="SMR" id="Q1JM77"/>
<dbReference type="KEGG" id="spk:MGAS9429_Spy0747"/>
<dbReference type="HOGENOM" id="CLU_014218_8_2_9"/>
<dbReference type="Proteomes" id="UP000002433">
    <property type="component" value="Chromosome"/>
</dbReference>
<dbReference type="GO" id="GO:0009376">
    <property type="term" value="C:HslUV protease complex"/>
    <property type="evidence" value="ECO:0007669"/>
    <property type="project" value="TreeGrafter"/>
</dbReference>
<dbReference type="GO" id="GO:0005524">
    <property type="term" value="F:ATP binding"/>
    <property type="evidence" value="ECO:0007669"/>
    <property type="project" value="UniProtKB-UniRule"/>
</dbReference>
<dbReference type="GO" id="GO:0016887">
    <property type="term" value="F:ATP hydrolysis activity"/>
    <property type="evidence" value="ECO:0007669"/>
    <property type="project" value="InterPro"/>
</dbReference>
<dbReference type="GO" id="GO:0140662">
    <property type="term" value="F:ATP-dependent protein folding chaperone"/>
    <property type="evidence" value="ECO:0007669"/>
    <property type="project" value="InterPro"/>
</dbReference>
<dbReference type="GO" id="GO:0046983">
    <property type="term" value="F:protein dimerization activity"/>
    <property type="evidence" value="ECO:0007669"/>
    <property type="project" value="InterPro"/>
</dbReference>
<dbReference type="GO" id="GO:0051082">
    <property type="term" value="F:unfolded protein binding"/>
    <property type="evidence" value="ECO:0007669"/>
    <property type="project" value="UniProtKB-UniRule"/>
</dbReference>
<dbReference type="GO" id="GO:0008270">
    <property type="term" value="F:zinc ion binding"/>
    <property type="evidence" value="ECO:0007669"/>
    <property type="project" value="InterPro"/>
</dbReference>
<dbReference type="GO" id="GO:0051301">
    <property type="term" value="P:cell division"/>
    <property type="evidence" value="ECO:0007669"/>
    <property type="project" value="TreeGrafter"/>
</dbReference>
<dbReference type="GO" id="GO:0051603">
    <property type="term" value="P:proteolysis involved in protein catabolic process"/>
    <property type="evidence" value="ECO:0007669"/>
    <property type="project" value="TreeGrafter"/>
</dbReference>
<dbReference type="CDD" id="cd19497">
    <property type="entry name" value="RecA-like_ClpX"/>
    <property type="match status" value="1"/>
</dbReference>
<dbReference type="FunFam" id="1.10.8.60:FF:000002">
    <property type="entry name" value="ATP-dependent Clp protease ATP-binding subunit ClpX"/>
    <property type="match status" value="1"/>
</dbReference>
<dbReference type="FunFam" id="3.40.50.300:FF:000005">
    <property type="entry name" value="ATP-dependent Clp protease ATP-binding subunit ClpX"/>
    <property type="match status" value="1"/>
</dbReference>
<dbReference type="Gene3D" id="1.10.8.60">
    <property type="match status" value="1"/>
</dbReference>
<dbReference type="Gene3D" id="6.20.220.10">
    <property type="entry name" value="ClpX chaperone, C4-type zinc finger domain"/>
    <property type="match status" value="1"/>
</dbReference>
<dbReference type="Gene3D" id="3.40.50.300">
    <property type="entry name" value="P-loop containing nucleotide triphosphate hydrolases"/>
    <property type="match status" value="1"/>
</dbReference>
<dbReference type="HAMAP" id="MF_00175">
    <property type="entry name" value="ClpX"/>
    <property type="match status" value="1"/>
</dbReference>
<dbReference type="InterPro" id="IPR003593">
    <property type="entry name" value="AAA+_ATPase"/>
</dbReference>
<dbReference type="InterPro" id="IPR050052">
    <property type="entry name" value="ATP-dep_Clp_protease_ClpX"/>
</dbReference>
<dbReference type="InterPro" id="IPR003959">
    <property type="entry name" value="ATPase_AAA_core"/>
</dbReference>
<dbReference type="InterPro" id="IPR019489">
    <property type="entry name" value="Clp_ATPase_C"/>
</dbReference>
<dbReference type="InterPro" id="IPR004487">
    <property type="entry name" value="Clp_protease_ATP-bd_su_ClpX"/>
</dbReference>
<dbReference type="InterPro" id="IPR046425">
    <property type="entry name" value="ClpX_bact"/>
</dbReference>
<dbReference type="InterPro" id="IPR027417">
    <property type="entry name" value="P-loop_NTPase"/>
</dbReference>
<dbReference type="InterPro" id="IPR010603">
    <property type="entry name" value="Znf_CppX_C4"/>
</dbReference>
<dbReference type="InterPro" id="IPR038366">
    <property type="entry name" value="Znf_CppX_C4_sf"/>
</dbReference>
<dbReference type="NCBIfam" id="TIGR00382">
    <property type="entry name" value="clpX"/>
    <property type="match status" value="1"/>
</dbReference>
<dbReference type="NCBIfam" id="NF003745">
    <property type="entry name" value="PRK05342.1"/>
    <property type="match status" value="1"/>
</dbReference>
<dbReference type="PANTHER" id="PTHR48102:SF7">
    <property type="entry name" value="ATP-DEPENDENT CLP PROTEASE ATP-BINDING SUBUNIT CLPX-LIKE, MITOCHONDRIAL"/>
    <property type="match status" value="1"/>
</dbReference>
<dbReference type="PANTHER" id="PTHR48102">
    <property type="entry name" value="ATP-DEPENDENT CLP PROTEASE ATP-BINDING SUBUNIT CLPX-LIKE, MITOCHONDRIAL-RELATED"/>
    <property type="match status" value="1"/>
</dbReference>
<dbReference type="Pfam" id="PF07724">
    <property type="entry name" value="AAA_2"/>
    <property type="match status" value="1"/>
</dbReference>
<dbReference type="Pfam" id="PF10431">
    <property type="entry name" value="ClpB_D2-small"/>
    <property type="match status" value="1"/>
</dbReference>
<dbReference type="Pfam" id="PF06689">
    <property type="entry name" value="zf-C4_ClpX"/>
    <property type="match status" value="1"/>
</dbReference>
<dbReference type="SMART" id="SM00382">
    <property type="entry name" value="AAA"/>
    <property type="match status" value="1"/>
</dbReference>
<dbReference type="SMART" id="SM01086">
    <property type="entry name" value="ClpB_D2-small"/>
    <property type="match status" value="1"/>
</dbReference>
<dbReference type="SMART" id="SM00994">
    <property type="entry name" value="zf-C4_ClpX"/>
    <property type="match status" value="1"/>
</dbReference>
<dbReference type="SUPFAM" id="SSF57716">
    <property type="entry name" value="Glucocorticoid receptor-like (DNA-binding domain)"/>
    <property type="match status" value="1"/>
</dbReference>
<dbReference type="SUPFAM" id="SSF52540">
    <property type="entry name" value="P-loop containing nucleoside triphosphate hydrolases"/>
    <property type="match status" value="1"/>
</dbReference>
<dbReference type="PROSITE" id="PS51902">
    <property type="entry name" value="CLPX_ZB"/>
    <property type="match status" value="1"/>
</dbReference>
<accession>Q1JM77</accession>
<sequence>MAGSRTNDIKVYCSFCGKSQDDVKKIIAGNNVFICNECVALSQEIIKEELSEEVLADLTEVPKPKELLDVLNQYVVGQDRAKRALSVAVYNHYKRVSFTESRDDDDVDLQKSNILMIGPTGSGKTFLAQTLAKSLNVPFAIADATSLTEAGYVGEDVENILLKLIQAADYNVERAERGIIYVDEIDKIAKKGENVSITRDVSGEGVQQALLKIIEGTVASVPPQGGRKHPNQEMIQIDTKNILFIVGGAFDGIEEIVKQRLGEKVIGFGQNSRKIDDNASYMQEIISEDIQKFGLIPEFIGRLPVVAALEQLKTSDLIRILTEPRNALVKQYQALLSYDGVELEFDKAALEAIATKAIERKTGARGLRSIIEETMLDIMFEIPSQEDVTKVRITKAAVEGKSKPVLETA</sequence>